<accession>A6NJB7</accession>
<accession>A8K663</accession>
<accession>B3KW48</accession>
<accession>Q6P584</accession>
<dbReference type="EMBL" id="AK124116">
    <property type="protein sequence ID" value="BAG54010.1"/>
    <property type="molecule type" value="mRNA"/>
</dbReference>
<dbReference type="EMBL" id="AK291528">
    <property type="protein sequence ID" value="BAF84217.1"/>
    <property type="molecule type" value="mRNA"/>
</dbReference>
<dbReference type="EMBL" id="AC006486">
    <property type="status" value="NOT_ANNOTATED_CDS"/>
    <property type="molecule type" value="Genomic_DNA"/>
</dbReference>
<dbReference type="EMBL" id="BC063021">
    <property type="protein sequence ID" value="AAH63021.1"/>
    <property type="molecule type" value="mRNA"/>
</dbReference>
<dbReference type="CCDS" id="CCDS33036.1">
    <molecule id="A6NJB7-1"/>
</dbReference>
<dbReference type="RefSeq" id="NP_954979.2">
    <molecule id="A6NJB7-1"/>
    <property type="nucleotide sequence ID" value="NM_199285.2"/>
</dbReference>
<dbReference type="RefSeq" id="XP_005258837.1">
    <property type="nucleotide sequence ID" value="XM_005258780.3"/>
</dbReference>
<dbReference type="RefSeq" id="XP_006723217.1">
    <molecule id="A6NJB7-1"/>
    <property type="nucleotide sequence ID" value="XM_006723154.4"/>
</dbReference>
<dbReference type="RefSeq" id="XP_011525089.1">
    <molecule id="A6NJB7-1"/>
    <property type="nucleotide sequence ID" value="XM_011526787.2"/>
</dbReference>
<dbReference type="RefSeq" id="XP_011525090.1">
    <molecule id="A6NJB7-1"/>
    <property type="nucleotide sequence ID" value="XM_011526788.2"/>
</dbReference>
<dbReference type="RefSeq" id="XP_011525091.1">
    <molecule id="A6NJB7-1"/>
    <property type="nucleotide sequence ID" value="XM_011526789.3"/>
</dbReference>
<dbReference type="RefSeq" id="XP_011525092.1">
    <molecule id="A6NJB7-1"/>
    <property type="nucleotide sequence ID" value="XM_011526790.3"/>
</dbReference>
<dbReference type="RefSeq" id="XP_054176593.1">
    <molecule id="A6NJB7-1"/>
    <property type="nucleotide sequence ID" value="XM_054320618.1"/>
</dbReference>
<dbReference type="RefSeq" id="XP_054176594.1">
    <molecule id="A6NJB7-1"/>
    <property type="nucleotide sequence ID" value="XM_054320619.1"/>
</dbReference>
<dbReference type="RefSeq" id="XP_054176595.1">
    <molecule id="A6NJB7-1"/>
    <property type="nucleotide sequence ID" value="XM_054320620.1"/>
</dbReference>
<dbReference type="RefSeq" id="XP_054176596.1">
    <molecule id="A6NJB7-1"/>
    <property type="nucleotide sequence ID" value="XM_054320621.1"/>
</dbReference>
<dbReference type="RefSeq" id="XP_054176597.1">
    <molecule id="A6NJB7-1"/>
    <property type="nucleotide sequence ID" value="XM_054320622.1"/>
</dbReference>
<dbReference type="SMR" id="A6NJB7"/>
<dbReference type="BioGRID" id="129830">
    <property type="interactions" value="13"/>
</dbReference>
<dbReference type="FunCoup" id="A6NJB7">
    <property type="interactions" value="412"/>
</dbReference>
<dbReference type="IntAct" id="A6NJB7">
    <property type="interactions" value="10"/>
</dbReference>
<dbReference type="STRING" id="9606.ENSP00000445247"/>
<dbReference type="GlyGen" id="A6NJB7">
    <property type="glycosylation" value="1 site"/>
</dbReference>
<dbReference type="iPTMnet" id="A6NJB7"/>
<dbReference type="PhosphoSitePlus" id="A6NJB7"/>
<dbReference type="BioMuta" id="PRR19"/>
<dbReference type="MassIVE" id="A6NJB7"/>
<dbReference type="PaxDb" id="9606-ENSP00000445247"/>
<dbReference type="PeptideAtlas" id="A6NJB7"/>
<dbReference type="Antibodypedia" id="45328">
    <property type="antibodies" value="84 antibodies from 14 providers"/>
</dbReference>
<dbReference type="DNASU" id="284338"/>
<dbReference type="Ensembl" id="ENST00000341747.8">
    <molecule id="A6NJB7-1"/>
    <property type="protein sequence ID" value="ENSP00000342709.3"/>
    <property type="gene ID" value="ENSG00000188368.11"/>
</dbReference>
<dbReference type="Ensembl" id="ENST00000499536.2">
    <molecule id="A6NJB7-1"/>
    <property type="protein sequence ID" value="ENSP00000445247.1"/>
    <property type="gene ID" value="ENSG00000188368.11"/>
</dbReference>
<dbReference type="Ensembl" id="ENST00000595750.2">
    <molecule id="A6NJB7-1"/>
    <property type="protein sequence ID" value="ENSP00000469298.2"/>
    <property type="gene ID" value="ENSG00000188368.11"/>
</dbReference>
<dbReference type="Ensembl" id="ENST00000598490.1">
    <molecule id="A6NJB7-2"/>
    <property type="protein sequence ID" value="ENSP00000472962.1"/>
    <property type="gene ID" value="ENSG00000188368.11"/>
</dbReference>
<dbReference type="GeneID" id="284338"/>
<dbReference type="KEGG" id="hsa:284338"/>
<dbReference type="MANE-Select" id="ENST00000341747.8">
    <property type="protein sequence ID" value="ENSP00000342709.3"/>
    <property type="RefSeq nucleotide sequence ID" value="NM_199285.3"/>
    <property type="RefSeq protein sequence ID" value="NP_954979.2"/>
</dbReference>
<dbReference type="UCSC" id="uc002oth.2">
    <molecule id="A6NJB7-1"/>
    <property type="organism name" value="human"/>
</dbReference>
<dbReference type="AGR" id="HGNC:33728"/>
<dbReference type="CTD" id="284338"/>
<dbReference type="DisGeNET" id="284338"/>
<dbReference type="GeneCards" id="PRR19"/>
<dbReference type="HGNC" id="HGNC:33728">
    <property type="gene designation" value="PRR19"/>
</dbReference>
<dbReference type="HPA" id="ENSG00000188368">
    <property type="expression patterns" value="Tissue enriched (testis)"/>
</dbReference>
<dbReference type="neXtProt" id="NX_A6NJB7"/>
<dbReference type="OpenTargets" id="ENSG00000188368"/>
<dbReference type="PharmGKB" id="PA162400164"/>
<dbReference type="VEuPathDB" id="HostDB:ENSG00000188368"/>
<dbReference type="eggNOG" id="ENOG502T05H">
    <property type="taxonomic scope" value="Eukaryota"/>
</dbReference>
<dbReference type="GeneTree" id="ENSGT00390000010703"/>
<dbReference type="HOGENOM" id="CLU_073234_0_0_1"/>
<dbReference type="InParanoid" id="A6NJB7"/>
<dbReference type="OMA" id="RRMTPSW"/>
<dbReference type="OrthoDB" id="9451259at2759"/>
<dbReference type="PAN-GO" id="A6NJB7">
    <property type="GO annotations" value="0 GO annotations based on evolutionary models"/>
</dbReference>
<dbReference type="PhylomeDB" id="A6NJB7"/>
<dbReference type="TreeFam" id="TF341908"/>
<dbReference type="PathwayCommons" id="A6NJB7"/>
<dbReference type="SignaLink" id="A6NJB7"/>
<dbReference type="BioGRID-ORCS" id="284338">
    <property type="hits" value="19 hits in 1150 CRISPR screens"/>
</dbReference>
<dbReference type="ChiTaRS" id="PRR19">
    <property type="organism name" value="human"/>
</dbReference>
<dbReference type="GenomeRNAi" id="284338"/>
<dbReference type="Pharos" id="A6NJB7">
    <property type="development level" value="Tdark"/>
</dbReference>
<dbReference type="PRO" id="PR:A6NJB7"/>
<dbReference type="Proteomes" id="UP000005640">
    <property type="component" value="Chromosome 19"/>
</dbReference>
<dbReference type="RNAct" id="A6NJB7">
    <property type="molecule type" value="protein"/>
</dbReference>
<dbReference type="Bgee" id="ENSG00000188368">
    <property type="expression patterns" value="Expressed in primordial germ cell in gonad and 129 other cell types or tissues"/>
</dbReference>
<dbReference type="ExpressionAtlas" id="A6NJB7">
    <property type="expression patterns" value="baseline and differential"/>
</dbReference>
<dbReference type="GO" id="GO:0005694">
    <property type="term" value="C:chromosome"/>
    <property type="evidence" value="ECO:0000250"/>
    <property type="project" value="UniProtKB"/>
</dbReference>
<dbReference type="GO" id="GO:0005634">
    <property type="term" value="C:nucleus"/>
    <property type="evidence" value="ECO:0000250"/>
    <property type="project" value="UniProtKB"/>
</dbReference>
<dbReference type="GO" id="GO:0051321">
    <property type="term" value="P:meiotic cell cycle"/>
    <property type="evidence" value="ECO:0007669"/>
    <property type="project" value="UniProtKB-KW"/>
</dbReference>
<dbReference type="InterPro" id="IPR029355">
    <property type="entry name" value="Pro-rich_19"/>
</dbReference>
<dbReference type="PANTHER" id="PTHR37346">
    <property type="entry name" value="PROLINE-RICH PROTEIN 19"/>
    <property type="match status" value="1"/>
</dbReference>
<dbReference type="PANTHER" id="PTHR37346:SF1">
    <property type="entry name" value="PROLINE-RICH PROTEIN 19"/>
    <property type="match status" value="1"/>
</dbReference>
<dbReference type="Pfam" id="PF15455">
    <property type="entry name" value="Pro-rich_19"/>
    <property type="match status" value="1"/>
</dbReference>
<name>PRR19_HUMAN</name>
<feature type="chain" id="PRO_0000332273" description="Proline-rich protein 19">
    <location>
        <begin position="1"/>
        <end position="356"/>
    </location>
</feature>
<feature type="region of interest" description="Disordered" evidence="2">
    <location>
        <begin position="1"/>
        <end position="53"/>
    </location>
</feature>
<feature type="region of interest" description="Disordered" evidence="2">
    <location>
        <begin position="95"/>
        <end position="143"/>
    </location>
</feature>
<feature type="region of interest" description="Disordered" evidence="2">
    <location>
        <begin position="216"/>
        <end position="255"/>
    </location>
</feature>
<feature type="region of interest" description="Disordered" evidence="2">
    <location>
        <begin position="312"/>
        <end position="331"/>
    </location>
</feature>
<feature type="compositionally biased region" description="Polar residues" evidence="2">
    <location>
        <begin position="1"/>
        <end position="12"/>
    </location>
</feature>
<feature type="compositionally biased region" description="Basic residues" evidence="2">
    <location>
        <begin position="19"/>
        <end position="29"/>
    </location>
</feature>
<feature type="splice variant" id="VSP_033371" description="In isoform 2." evidence="3 4">
    <original>AKPGVSERKMTPFWINSPDQVPEQERQRKQQGTKEFTFPMPYTSSMPTAHRGSLAPPRGPWPPYFPSLSSPSGTAWGPPTAFDLLKSIWLVATPPPPRPWGVGLPQPLPQPSSPLLPRTSVLDWSPSPPSPLPSLSWVVAQSSPEAWSFPPMRLY</original>
    <variation>ERPSCPCTPLSFVGSSSASLYASFLCARGQAWGL</variation>
    <location>
        <begin position="202"/>
        <end position="356"/>
    </location>
</feature>
<feature type="sequence conflict" description="In Ref. 1; BAF84217." evidence="5" ref="1">
    <original>S</original>
    <variation>N</variation>
    <location>
        <position position="99"/>
    </location>
</feature>
<organism>
    <name type="scientific">Homo sapiens</name>
    <name type="common">Human</name>
    <dbReference type="NCBI Taxonomy" id="9606"/>
    <lineage>
        <taxon>Eukaryota</taxon>
        <taxon>Metazoa</taxon>
        <taxon>Chordata</taxon>
        <taxon>Craniata</taxon>
        <taxon>Vertebrata</taxon>
        <taxon>Euteleostomi</taxon>
        <taxon>Mammalia</taxon>
        <taxon>Eutheria</taxon>
        <taxon>Euarchontoglires</taxon>
        <taxon>Primates</taxon>
        <taxon>Haplorrhini</taxon>
        <taxon>Catarrhini</taxon>
        <taxon>Hominidae</taxon>
        <taxon>Homo</taxon>
    </lineage>
</organism>
<comment type="function">
    <text evidence="1">Promotes meiotic crossing over formation through its interaction with CNTD1 by participating in the crossover differentiation step of crossover-specific recombination intermediates.</text>
</comment>
<comment type="subunit">
    <text evidence="1">Interacts with CNTD1.</text>
</comment>
<comment type="interaction">
    <interactant intactId="EBI-10174045">
        <id>A6NJB7</id>
    </interactant>
    <interactant intactId="EBI-948001">
        <id>Q15323</id>
        <label>KRT31</label>
    </interactant>
    <organismsDiffer>false</organismsDiffer>
    <experiments>3</experiments>
</comment>
<comment type="interaction">
    <interactant intactId="EBI-10174045">
        <id>A6NJB7</id>
    </interactant>
    <interactant intactId="EBI-748397">
        <id>P50222</id>
        <label>MEOX2</label>
    </interactant>
    <organismsDiffer>false</organismsDiffer>
    <experiments>3</experiments>
</comment>
<comment type="interaction">
    <interactant intactId="EBI-11998870">
        <id>A6NJB7-2</id>
    </interactant>
    <interactant intactId="EBI-10173507">
        <id>Q6UY14-3</id>
        <label>ADAMTSL4</label>
    </interactant>
    <organismsDiffer>false</organismsDiffer>
    <experiments>3</experiments>
</comment>
<comment type="interaction">
    <interactant intactId="EBI-11998870">
        <id>A6NJB7-2</id>
    </interactant>
    <interactant intactId="EBI-3867333">
        <id>A8MQ03</id>
        <label>CYSRT1</label>
    </interactant>
    <organismsDiffer>false</organismsDiffer>
    <experiments>3</experiments>
</comment>
<comment type="interaction">
    <interactant intactId="EBI-11998870">
        <id>A6NJB7-2</id>
    </interactant>
    <interactant intactId="EBI-948001">
        <id>Q15323</id>
        <label>KRT31</label>
    </interactant>
    <organismsDiffer>false</organismsDiffer>
    <experiments>3</experiments>
</comment>
<comment type="interaction">
    <interactant intactId="EBI-11998870">
        <id>A6NJB7-2</id>
    </interactant>
    <interactant intactId="EBI-1047093">
        <id>O76011</id>
        <label>KRT34</label>
    </interactant>
    <organismsDiffer>false</organismsDiffer>
    <experiments>6</experiments>
</comment>
<comment type="interaction">
    <interactant intactId="EBI-11998870">
        <id>A6NJB7-2</id>
    </interactant>
    <interactant intactId="EBI-10171774">
        <id>P60410</id>
        <label>KRTAP10-8</label>
    </interactant>
    <organismsDiffer>false</organismsDiffer>
    <experiments>3</experiments>
</comment>
<comment type="interaction">
    <interactant intactId="EBI-11998870">
        <id>A6NJB7-2</id>
    </interactant>
    <interactant intactId="EBI-352915">
        <id>O75340</id>
        <label>PDCD6</label>
    </interactant>
    <organismsDiffer>false</organismsDiffer>
    <experiments>3</experiments>
</comment>
<comment type="interaction">
    <interactant intactId="EBI-11998870">
        <id>A6NJB7-2</id>
    </interactant>
    <interactant intactId="EBI-492476">
        <id>Q96RU7</id>
        <label>TRIB3</label>
    </interactant>
    <organismsDiffer>false</organismsDiffer>
    <experiments>3</experiments>
</comment>
<comment type="subcellular location">
    <subcellularLocation>
        <location evidence="1">Nucleus</location>
    </subcellularLocation>
    <subcellularLocation>
        <location evidence="1">Chromosome</location>
    </subcellularLocation>
    <text evidence="1">Co-localized at crossover sites with CNTD1. Localizes on synapsed chromosome only in mid/late pachytene spermatocytes.</text>
</comment>
<comment type="alternative products">
    <event type="alternative splicing"/>
    <isoform>
        <id>A6NJB7-1</id>
        <name>1</name>
        <sequence type="displayed"/>
    </isoform>
    <isoform>
        <id>A6NJB7-2</id>
        <name>2</name>
        <sequence type="described" ref="VSP_033371"/>
    </isoform>
</comment>
<reference key="1">
    <citation type="journal article" date="2004" name="Nat. Genet.">
        <title>Complete sequencing and characterization of 21,243 full-length human cDNAs.</title>
        <authorList>
            <person name="Ota T."/>
            <person name="Suzuki Y."/>
            <person name="Nishikawa T."/>
            <person name="Otsuki T."/>
            <person name="Sugiyama T."/>
            <person name="Irie R."/>
            <person name="Wakamatsu A."/>
            <person name="Hayashi K."/>
            <person name="Sato H."/>
            <person name="Nagai K."/>
            <person name="Kimura K."/>
            <person name="Makita H."/>
            <person name="Sekine M."/>
            <person name="Obayashi M."/>
            <person name="Nishi T."/>
            <person name="Shibahara T."/>
            <person name="Tanaka T."/>
            <person name="Ishii S."/>
            <person name="Yamamoto J."/>
            <person name="Saito K."/>
            <person name="Kawai Y."/>
            <person name="Isono Y."/>
            <person name="Nakamura Y."/>
            <person name="Nagahari K."/>
            <person name="Murakami K."/>
            <person name="Yasuda T."/>
            <person name="Iwayanagi T."/>
            <person name="Wagatsuma M."/>
            <person name="Shiratori A."/>
            <person name="Sudo H."/>
            <person name="Hosoiri T."/>
            <person name="Kaku Y."/>
            <person name="Kodaira H."/>
            <person name="Kondo H."/>
            <person name="Sugawara M."/>
            <person name="Takahashi M."/>
            <person name="Kanda K."/>
            <person name="Yokoi T."/>
            <person name="Furuya T."/>
            <person name="Kikkawa E."/>
            <person name="Omura Y."/>
            <person name="Abe K."/>
            <person name="Kamihara K."/>
            <person name="Katsuta N."/>
            <person name="Sato K."/>
            <person name="Tanikawa M."/>
            <person name="Yamazaki M."/>
            <person name="Ninomiya K."/>
            <person name="Ishibashi T."/>
            <person name="Yamashita H."/>
            <person name="Murakawa K."/>
            <person name="Fujimori K."/>
            <person name="Tanai H."/>
            <person name="Kimata M."/>
            <person name="Watanabe M."/>
            <person name="Hiraoka S."/>
            <person name="Chiba Y."/>
            <person name="Ishida S."/>
            <person name="Ono Y."/>
            <person name="Takiguchi S."/>
            <person name="Watanabe S."/>
            <person name="Yosida M."/>
            <person name="Hotuta T."/>
            <person name="Kusano J."/>
            <person name="Kanehori K."/>
            <person name="Takahashi-Fujii A."/>
            <person name="Hara H."/>
            <person name="Tanase T.-O."/>
            <person name="Nomura Y."/>
            <person name="Togiya S."/>
            <person name="Komai F."/>
            <person name="Hara R."/>
            <person name="Takeuchi K."/>
            <person name="Arita M."/>
            <person name="Imose N."/>
            <person name="Musashino K."/>
            <person name="Yuuki H."/>
            <person name="Oshima A."/>
            <person name="Sasaki N."/>
            <person name="Aotsuka S."/>
            <person name="Yoshikawa Y."/>
            <person name="Matsunawa H."/>
            <person name="Ichihara T."/>
            <person name="Shiohata N."/>
            <person name="Sano S."/>
            <person name="Moriya S."/>
            <person name="Momiyama H."/>
            <person name="Satoh N."/>
            <person name="Takami S."/>
            <person name="Terashima Y."/>
            <person name="Suzuki O."/>
            <person name="Nakagawa S."/>
            <person name="Senoh A."/>
            <person name="Mizoguchi H."/>
            <person name="Goto Y."/>
            <person name="Shimizu F."/>
            <person name="Wakebe H."/>
            <person name="Hishigaki H."/>
            <person name="Watanabe T."/>
            <person name="Sugiyama A."/>
            <person name="Takemoto M."/>
            <person name="Kawakami B."/>
            <person name="Yamazaki M."/>
            <person name="Watanabe K."/>
            <person name="Kumagai A."/>
            <person name="Itakura S."/>
            <person name="Fukuzumi Y."/>
            <person name="Fujimori Y."/>
            <person name="Komiyama M."/>
            <person name="Tashiro H."/>
            <person name="Tanigami A."/>
            <person name="Fujiwara T."/>
            <person name="Ono T."/>
            <person name="Yamada K."/>
            <person name="Fujii Y."/>
            <person name="Ozaki K."/>
            <person name="Hirao M."/>
            <person name="Ohmori Y."/>
            <person name="Kawabata A."/>
            <person name="Hikiji T."/>
            <person name="Kobatake N."/>
            <person name="Inagaki H."/>
            <person name="Ikema Y."/>
            <person name="Okamoto S."/>
            <person name="Okitani R."/>
            <person name="Kawakami T."/>
            <person name="Noguchi S."/>
            <person name="Itoh T."/>
            <person name="Shigeta K."/>
            <person name="Senba T."/>
            <person name="Matsumura K."/>
            <person name="Nakajima Y."/>
            <person name="Mizuno T."/>
            <person name="Morinaga M."/>
            <person name="Sasaki M."/>
            <person name="Togashi T."/>
            <person name="Oyama M."/>
            <person name="Hata H."/>
            <person name="Watanabe M."/>
            <person name="Komatsu T."/>
            <person name="Mizushima-Sugano J."/>
            <person name="Satoh T."/>
            <person name="Shirai Y."/>
            <person name="Takahashi Y."/>
            <person name="Nakagawa K."/>
            <person name="Okumura K."/>
            <person name="Nagase T."/>
            <person name="Nomura N."/>
            <person name="Kikuchi H."/>
            <person name="Masuho Y."/>
            <person name="Yamashita R."/>
            <person name="Nakai K."/>
            <person name="Yada T."/>
            <person name="Nakamura Y."/>
            <person name="Ohara O."/>
            <person name="Isogai T."/>
            <person name="Sugano S."/>
        </authorList>
    </citation>
    <scope>NUCLEOTIDE SEQUENCE [LARGE SCALE MRNA] (ISOFORMS 1 AND 2)</scope>
    <source>
        <tissue>Placenta</tissue>
        <tissue>Testis</tissue>
    </source>
</reference>
<reference key="2">
    <citation type="journal article" date="2004" name="Nature">
        <title>The DNA sequence and biology of human chromosome 19.</title>
        <authorList>
            <person name="Grimwood J."/>
            <person name="Gordon L.A."/>
            <person name="Olsen A.S."/>
            <person name="Terry A."/>
            <person name="Schmutz J."/>
            <person name="Lamerdin J.E."/>
            <person name="Hellsten U."/>
            <person name="Goodstein D."/>
            <person name="Couronne O."/>
            <person name="Tran-Gyamfi M."/>
            <person name="Aerts A."/>
            <person name="Altherr M."/>
            <person name="Ashworth L."/>
            <person name="Bajorek E."/>
            <person name="Black S."/>
            <person name="Branscomb E."/>
            <person name="Caenepeel S."/>
            <person name="Carrano A.V."/>
            <person name="Caoile C."/>
            <person name="Chan Y.M."/>
            <person name="Christensen M."/>
            <person name="Cleland C.A."/>
            <person name="Copeland A."/>
            <person name="Dalin E."/>
            <person name="Dehal P."/>
            <person name="Denys M."/>
            <person name="Detter J.C."/>
            <person name="Escobar J."/>
            <person name="Flowers D."/>
            <person name="Fotopulos D."/>
            <person name="Garcia C."/>
            <person name="Georgescu A.M."/>
            <person name="Glavina T."/>
            <person name="Gomez M."/>
            <person name="Gonzales E."/>
            <person name="Groza M."/>
            <person name="Hammon N."/>
            <person name="Hawkins T."/>
            <person name="Haydu L."/>
            <person name="Ho I."/>
            <person name="Huang W."/>
            <person name="Israni S."/>
            <person name="Jett J."/>
            <person name="Kadner K."/>
            <person name="Kimball H."/>
            <person name="Kobayashi A."/>
            <person name="Larionov V."/>
            <person name="Leem S.-H."/>
            <person name="Lopez F."/>
            <person name="Lou Y."/>
            <person name="Lowry S."/>
            <person name="Malfatti S."/>
            <person name="Martinez D."/>
            <person name="McCready P.M."/>
            <person name="Medina C."/>
            <person name="Morgan J."/>
            <person name="Nelson K."/>
            <person name="Nolan M."/>
            <person name="Ovcharenko I."/>
            <person name="Pitluck S."/>
            <person name="Pollard M."/>
            <person name="Popkie A.P."/>
            <person name="Predki P."/>
            <person name="Quan G."/>
            <person name="Ramirez L."/>
            <person name="Rash S."/>
            <person name="Retterer J."/>
            <person name="Rodriguez A."/>
            <person name="Rogers S."/>
            <person name="Salamov A."/>
            <person name="Salazar A."/>
            <person name="She X."/>
            <person name="Smith D."/>
            <person name="Slezak T."/>
            <person name="Solovyev V."/>
            <person name="Thayer N."/>
            <person name="Tice H."/>
            <person name="Tsai M."/>
            <person name="Ustaszewska A."/>
            <person name="Vo N."/>
            <person name="Wagner M."/>
            <person name="Wheeler J."/>
            <person name="Wu K."/>
            <person name="Xie G."/>
            <person name="Yang J."/>
            <person name="Dubchak I."/>
            <person name="Furey T.S."/>
            <person name="DeJong P."/>
            <person name="Dickson M."/>
            <person name="Gordon D."/>
            <person name="Eichler E.E."/>
            <person name="Pennacchio L.A."/>
            <person name="Richardson P."/>
            <person name="Stubbs L."/>
            <person name="Rokhsar D.S."/>
            <person name="Myers R.M."/>
            <person name="Rubin E.M."/>
            <person name="Lucas S.M."/>
        </authorList>
    </citation>
    <scope>NUCLEOTIDE SEQUENCE [LARGE SCALE GENOMIC DNA]</scope>
</reference>
<reference key="3">
    <citation type="journal article" date="2004" name="Genome Res.">
        <title>The status, quality, and expansion of the NIH full-length cDNA project: the Mammalian Gene Collection (MGC).</title>
        <authorList>
            <consortium name="The MGC Project Team"/>
        </authorList>
    </citation>
    <scope>NUCLEOTIDE SEQUENCE [LARGE SCALE MRNA] (ISOFORM 2)</scope>
    <source>
        <tissue>Brain</tissue>
    </source>
</reference>
<gene>
    <name evidence="6" type="primary">PRR19</name>
</gene>
<protein>
    <recommendedName>
        <fullName evidence="5">Proline-rich protein 19</fullName>
    </recommendedName>
</protein>
<keyword id="KW-0025">Alternative splicing</keyword>
<keyword id="KW-0158">Chromosome</keyword>
<keyword id="KW-0469">Meiosis</keyword>
<keyword id="KW-0539">Nucleus</keyword>
<keyword id="KW-1185">Reference proteome</keyword>
<evidence type="ECO:0000250" key="1">
    <source>
        <dbReference type="UniProtKB" id="B2RW88"/>
    </source>
</evidence>
<evidence type="ECO:0000256" key="2">
    <source>
        <dbReference type="SAM" id="MobiDB-lite"/>
    </source>
</evidence>
<evidence type="ECO:0000303" key="3">
    <source>
    </source>
</evidence>
<evidence type="ECO:0000303" key="4">
    <source>
    </source>
</evidence>
<evidence type="ECO:0000305" key="5"/>
<evidence type="ECO:0000312" key="6">
    <source>
        <dbReference type="HGNC" id="HGNC:33728"/>
    </source>
</evidence>
<sequence>MDTQGPVSQPFQQPEKPGRVRRRKTRRERNKALVGSRRPLAHHDPPVAIRDPPVVPTASKLVVITQGRLSREHRGLFNHEVKSLDVARLLSSGTLVPGSPTLPAKPSPSPGRAQEPAPRSRDKENQVPGGSGPGPPSSPELSGVGQLLAELQCQLSLPQAFPRRNLIQDARDAIVHTLQACHGCVPDLALVLRGCQPPLPGAKPGVSERKMTPFWINSPDQVPEQERQRKQQGTKEFTFPMPYTSSMPTAHRGSLAPPRGPWPPYFPSLSSPSGTAWGPPTAFDLLKSIWLVATPPPPRPWGVGLPQPLPQPSSPLLPRTSVLDWSPSPPSPLPSLSWVVAQSSPEAWSFPPMRLY</sequence>
<proteinExistence type="evidence at protein level"/>